<proteinExistence type="evidence at transcript level"/>
<name>DRE1D_ARATH</name>
<sequence>MNPFYSTFPDSFLSISDHRSPVSDSSECSPKLASSCPKKRAGRKKFRETRHPIYRGVRQRNSGKWVCEVREPNKKSRIWLGTFPTVEMAARAHDVAALALRGRSACLNFADSAWRLRIPETTCPKEIQKAASEAAMAFQNETTTEGSKTAAEAEEAAGEGVREGERRAEEQNGGVFYMDDEALLGMPNFFENMAEGMLLPPPEVGWNHNDFDGVGDVSLWSFDE</sequence>
<organism>
    <name type="scientific">Arabidopsis thaliana</name>
    <name type="common">Mouse-ear cress</name>
    <dbReference type="NCBI Taxonomy" id="3702"/>
    <lineage>
        <taxon>Eukaryota</taxon>
        <taxon>Viridiplantae</taxon>
        <taxon>Streptophyta</taxon>
        <taxon>Embryophyta</taxon>
        <taxon>Tracheophyta</taxon>
        <taxon>Spermatophyta</taxon>
        <taxon>Magnoliopsida</taxon>
        <taxon>eudicotyledons</taxon>
        <taxon>Gunneridae</taxon>
        <taxon>Pentapetalae</taxon>
        <taxon>rosids</taxon>
        <taxon>malvids</taxon>
        <taxon>Brassicales</taxon>
        <taxon>Brassicaceae</taxon>
        <taxon>Camelineae</taxon>
        <taxon>Arabidopsis</taxon>
    </lineage>
</organism>
<protein>
    <recommendedName>
        <fullName>Dehydration-responsive element-binding protein 1D</fullName>
        <shortName>Protein DREB1D</shortName>
    </recommendedName>
    <alternativeName>
        <fullName>C-repeat/dehydration-responsive element-binding factor 4</fullName>
        <shortName>C-repeat-binding factor 4</shortName>
        <shortName>CRT/DRE-binding factor 4</shortName>
    </alternativeName>
</protein>
<keyword id="KW-0938">Abscisic acid signaling pathway</keyword>
<keyword id="KW-0010">Activator</keyword>
<keyword id="KW-0238">DNA-binding</keyword>
<keyword id="KW-0539">Nucleus</keyword>
<keyword id="KW-1185">Reference proteome</keyword>
<keyword id="KW-0346">Stress response</keyword>
<keyword id="KW-0804">Transcription</keyword>
<keyword id="KW-0805">Transcription regulation</keyword>
<gene>
    <name type="primary">DREB1D</name>
    <name type="synonym">CBF4</name>
    <name type="synonym">ERF028</name>
    <name type="ordered locus">At5g51990</name>
    <name type="ORF">MSG15.7</name>
</gene>
<feature type="chain" id="PRO_0000112531" description="Dehydration-responsive element-binding protein 1D">
    <location>
        <begin position="1"/>
        <end position="224"/>
    </location>
</feature>
<feature type="DNA-binding region" description="AP2/ERF" evidence="2">
    <location>
        <begin position="53"/>
        <end position="110"/>
    </location>
</feature>
<feature type="region of interest" description="Disordered" evidence="3">
    <location>
        <begin position="20"/>
        <end position="45"/>
    </location>
</feature>
<feature type="region of interest" description="Disordered" evidence="3">
    <location>
        <begin position="141"/>
        <end position="172"/>
    </location>
</feature>
<feature type="short sequence motif" description="Nuclear localization signal" evidence="1">
    <location>
        <begin position="38"/>
        <end position="50"/>
    </location>
</feature>
<feature type="compositionally biased region" description="Low complexity" evidence="3">
    <location>
        <begin position="141"/>
        <end position="150"/>
    </location>
</feature>
<feature type="compositionally biased region" description="Basic and acidic residues" evidence="3">
    <location>
        <begin position="160"/>
        <end position="170"/>
    </location>
</feature>
<reference key="1">
    <citation type="submission" date="2004-02" db="EMBL/GenBank/DDBJ databases">
        <title>Molecular cloning, expression, phylogenetic and functional characterization of the Arabidopsis AP2/EREBP transcription factor family.</title>
        <authorList>
            <person name="Pan Y."/>
            <person name="Gong W."/>
            <person name="Liu D."/>
            <person name="Fu Q."/>
            <person name="Mei W.-Q."/>
            <person name="Song W.-Q."/>
            <person name="Ma L.-G."/>
            <person name="Luo J.-C."/>
            <person name="Deng X.-W."/>
            <person name="Zhu Y.-X."/>
        </authorList>
    </citation>
    <scope>NUCLEOTIDE SEQUENCE [MRNA]</scope>
</reference>
<reference key="2">
    <citation type="journal article" date="1998" name="DNA Res.">
        <title>Structural analysis of Arabidopsis thaliana chromosome 5. VII. Sequence features of the regions of 1,013,767 bp covered by sixteen physically assigned P1 and TAC clones.</title>
        <authorList>
            <person name="Nakamura Y."/>
            <person name="Sato S."/>
            <person name="Asamizu E."/>
            <person name="Kaneko T."/>
            <person name="Kotani H."/>
            <person name="Miyajima N."/>
            <person name="Tabata S."/>
        </authorList>
    </citation>
    <scope>NUCLEOTIDE SEQUENCE [LARGE SCALE GENOMIC DNA]</scope>
    <source>
        <strain>cv. Columbia</strain>
    </source>
</reference>
<reference key="3">
    <citation type="journal article" date="2017" name="Plant J.">
        <title>Araport11: a complete reannotation of the Arabidopsis thaliana reference genome.</title>
        <authorList>
            <person name="Cheng C.Y."/>
            <person name="Krishnakumar V."/>
            <person name="Chan A.P."/>
            <person name="Thibaud-Nissen F."/>
            <person name="Schobel S."/>
            <person name="Town C.D."/>
        </authorList>
    </citation>
    <scope>GENOME REANNOTATION</scope>
    <source>
        <strain>cv. Columbia</strain>
    </source>
</reference>
<reference key="4">
    <citation type="journal article" date="2006" name="Plant Biotechnol. J.">
        <title>Simultaneous high-throughput recombinational cloning of open reading frames in closed and open configurations.</title>
        <authorList>
            <person name="Underwood B.A."/>
            <person name="Vanderhaeghen R."/>
            <person name="Whitford R."/>
            <person name="Town C.D."/>
            <person name="Hilson P."/>
        </authorList>
    </citation>
    <scope>NUCLEOTIDE SEQUENCE [LARGE SCALE MRNA]</scope>
    <source>
        <strain>cv. Columbia</strain>
    </source>
</reference>
<reference key="5">
    <citation type="journal article" date="2002" name="Biochem. Biophys. Res. Commun.">
        <title>DNA-binding specificity of the ERF/AP2 domain of Arabidopsis DREBs, transcription factors involved in dehydration- and cold-inducible gene expression.</title>
        <authorList>
            <person name="Sakuma Y."/>
            <person name="Liu Q."/>
            <person name="Dubouzet J.G."/>
            <person name="Abe H."/>
            <person name="Shinozaki K."/>
            <person name="Yamaguchi-Shinozaki K."/>
        </authorList>
    </citation>
    <scope>GENE FAMILY</scope>
    <scope>FUNCTION</scope>
    <scope>INDUCTION</scope>
</reference>
<reference key="6">
    <citation type="journal article" date="2002" name="Plant Physiol.">
        <title>Transcription factor CBF4 is a regulator of drought adaptation in Arabidopsis.</title>
        <authorList>
            <person name="Haake V."/>
            <person name="Cook D."/>
            <person name="Riechmann J.L."/>
            <person name="Pineda O."/>
            <person name="Thomashow M.F."/>
            <person name="Zhang J.Z."/>
        </authorList>
    </citation>
    <scope>FUNCTION</scope>
    <scope>INDUCTION</scope>
</reference>
<reference key="7">
    <citation type="journal article" date="2006" name="Plant Physiol.">
        <title>Genome-wide analysis of the ERF gene family in Arabidopsis and rice.</title>
        <authorList>
            <person name="Nakano T."/>
            <person name="Suzuki K."/>
            <person name="Fujimura T."/>
            <person name="Shinshi H."/>
        </authorList>
    </citation>
    <scope>GENE FAMILY</scope>
    <scope>NOMENCLATURE</scope>
</reference>
<dbReference type="EMBL" id="AY560857">
    <property type="protein sequence ID" value="AAT44924.1"/>
    <property type="molecule type" value="mRNA"/>
</dbReference>
<dbReference type="EMBL" id="AB015478">
    <property type="protein sequence ID" value="BAB11047.1"/>
    <property type="molecule type" value="Genomic_DNA"/>
</dbReference>
<dbReference type="EMBL" id="CP002688">
    <property type="protein sequence ID" value="AED96156.1"/>
    <property type="molecule type" value="Genomic_DNA"/>
</dbReference>
<dbReference type="EMBL" id="DQ447064">
    <property type="protein sequence ID" value="ABE66241.1"/>
    <property type="molecule type" value="mRNA"/>
</dbReference>
<dbReference type="EMBL" id="DQ653361">
    <property type="protein sequence ID" value="ABK28752.1"/>
    <property type="status" value="ALT_SEQ"/>
    <property type="molecule type" value="mRNA"/>
</dbReference>
<dbReference type="RefSeq" id="NP_200012.1">
    <property type="nucleotide sequence ID" value="NM_124578.2"/>
</dbReference>
<dbReference type="SMR" id="Q9FJ93"/>
<dbReference type="BioGRID" id="20519">
    <property type="interactions" value="3"/>
</dbReference>
<dbReference type="FunCoup" id="Q9FJ93">
    <property type="interactions" value="34"/>
</dbReference>
<dbReference type="STRING" id="3702.Q9FJ93"/>
<dbReference type="iPTMnet" id="Q9FJ93"/>
<dbReference type="PaxDb" id="3702-AT5G51990.1"/>
<dbReference type="EnsemblPlants" id="AT5G51990.1">
    <property type="protein sequence ID" value="AT5G51990.1"/>
    <property type="gene ID" value="AT5G51990"/>
</dbReference>
<dbReference type="GeneID" id="835274"/>
<dbReference type="Gramene" id="AT5G51990.1">
    <property type="protein sequence ID" value="AT5G51990.1"/>
    <property type="gene ID" value="AT5G51990"/>
</dbReference>
<dbReference type="KEGG" id="ath:AT5G51990"/>
<dbReference type="Araport" id="AT5G51990"/>
<dbReference type="TAIR" id="AT5G51990">
    <property type="gene designation" value="CBF4"/>
</dbReference>
<dbReference type="eggNOG" id="ENOG502QQ5M">
    <property type="taxonomic scope" value="Eukaryota"/>
</dbReference>
<dbReference type="HOGENOM" id="CLU_063331_1_0_1"/>
<dbReference type="InParanoid" id="Q9FJ93"/>
<dbReference type="OMA" id="EEVFYMD"/>
<dbReference type="OrthoDB" id="676764at2759"/>
<dbReference type="PhylomeDB" id="Q9FJ93"/>
<dbReference type="PRO" id="PR:Q9FJ93"/>
<dbReference type="Proteomes" id="UP000006548">
    <property type="component" value="Chromosome 5"/>
</dbReference>
<dbReference type="ExpressionAtlas" id="Q9FJ93">
    <property type="expression patterns" value="baseline and differential"/>
</dbReference>
<dbReference type="GO" id="GO:0005634">
    <property type="term" value="C:nucleus"/>
    <property type="evidence" value="ECO:0007669"/>
    <property type="project" value="UniProtKB-SubCell"/>
</dbReference>
<dbReference type="GO" id="GO:0003700">
    <property type="term" value="F:DNA-binding transcription factor activity"/>
    <property type="evidence" value="ECO:0000250"/>
    <property type="project" value="TAIR"/>
</dbReference>
<dbReference type="GO" id="GO:0000976">
    <property type="term" value="F:transcription cis-regulatory region binding"/>
    <property type="evidence" value="ECO:0000353"/>
    <property type="project" value="TAIR"/>
</dbReference>
<dbReference type="GO" id="GO:0009738">
    <property type="term" value="P:abscisic acid-activated signaling pathway"/>
    <property type="evidence" value="ECO:0007669"/>
    <property type="project" value="UniProtKB-KW"/>
</dbReference>
<dbReference type="GO" id="GO:0019760">
    <property type="term" value="P:glucosinolate metabolic process"/>
    <property type="evidence" value="ECO:0000315"/>
    <property type="project" value="TAIR"/>
</dbReference>
<dbReference type="CDD" id="cd00018">
    <property type="entry name" value="AP2"/>
    <property type="match status" value="1"/>
</dbReference>
<dbReference type="FunFam" id="3.30.730.10:FF:000001">
    <property type="entry name" value="Ethylene-responsive transcription factor 2"/>
    <property type="match status" value="1"/>
</dbReference>
<dbReference type="Gene3D" id="3.30.730.10">
    <property type="entry name" value="AP2/ERF domain"/>
    <property type="match status" value="1"/>
</dbReference>
<dbReference type="InterPro" id="IPR001471">
    <property type="entry name" value="AP2/ERF_dom"/>
</dbReference>
<dbReference type="InterPro" id="IPR036955">
    <property type="entry name" value="AP2/ERF_dom_sf"/>
</dbReference>
<dbReference type="InterPro" id="IPR016177">
    <property type="entry name" value="DNA-bd_dom_sf"/>
</dbReference>
<dbReference type="InterPro" id="IPR045277">
    <property type="entry name" value="DRE1A-I"/>
</dbReference>
<dbReference type="PANTHER" id="PTHR31839">
    <property type="entry name" value="DEHYDRATION-RESPONSIVE ELEMENT-BINDING PROTEIN 1D"/>
    <property type="match status" value="1"/>
</dbReference>
<dbReference type="PANTHER" id="PTHR31839:SF2">
    <property type="entry name" value="DEHYDRATION-RESPONSIVE ELEMENT-BINDING PROTEIN 1D"/>
    <property type="match status" value="1"/>
</dbReference>
<dbReference type="Pfam" id="PF00847">
    <property type="entry name" value="AP2"/>
    <property type="match status" value="1"/>
</dbReference>
<dbReference type="PRINTS" id="PR00367">
    <property type="entry name" value="ETHRSPELEMNT"/>
</dbReference>
<dbReference type="SMART" id="SM00380">
    <property type="entry name" value="AP2"/>
    <property type="match status" value="1"/>
</dbReference>
<dbReference type="SUPFAM" id="SSF54171">
    <property type="entry name" value="DNA-binding domain"/>
    <property type="match status" value="1"/>
</dbReference>
<dbReference type="PROSITE" id="PS51032">
    <property type="entry name" value="AP2_ERF"/>
    <property type="match status" value="1"/>
</dbReference>
<accession>Q9FJ93</accession>
<accession>A0MFN5</accession>
<accession>Q1PDK4</accession>
<accession>Q6J9R8</accession>
<comment type="function">
    <text evidence="4 5">Transcriptional activator that binds specifically to the DNA sequence 5'-[AG]CCGAC-3'. Binding to the C-repeat/DRE element mediates abscisic acid- and dehydration-inducible transcription. CBF/DREB1 factors play a key role in freezing tolerance and cold acclimation.</text>
</comment>
<comment type="subcellular location">
    <subcellularLocation>
        <location evidence="6">Nucleus</location>
    </subcellularLocation>
</comment>
<comment type="induction">
    <text evidence="4 5">By high-salt stress, drought stress and abscisic acid (ABA) treatment.</text>
</comment>
<comment type="similarity">
    <text evidence="6">Belongs to the AP2/ERF transcription factor family. ERF subfamily.</text>
</comment>
<comment type="sequence caution" evidence="6">
    <conflict type="erroneous termination">
        <sequence resource="EMBL-CDS" id="ABK28752"/>
    </conflict>
    <text>Extended C-terminus.</text>
</comment>
<evidence type="ECO:0000255" key="1"/>
<evidence type="ECO:0000255" key="2">
    <source>
        <dbReference type="PROSITE-ProRule" id="PRU00366"/>
    </source>
</evidence>
<evidence type="ECO:0000256" key="3">
    <source>
        <dbReference type="SAM" id="MobiDB-lite"/>
    </source>
</evidence>
<evidence type="ECO:0000269" key="4">
    <source>
    </source>
</evidence>
<evidence type="ECO:0000269" key="5">
    <source>
    </source>
</evidence>
<evidence type="ECO:0000305" key="6"/>